<dbReference type="EMBL" id="CP000425">
    <property type="protein sequence ID" value="ABJ72858.1"/>
    <property type="molecule type" value="Genomic_DNA"/>
</dbReference>
<dbReference type="RefSeq" id="WP_011676153.1">
    <property type="nucleotide sequence ID" value="NC_008527.1"/>
</dbReference>
<dbReference type="SMR" id="Q02YW4"/>
<dbReference type="KEGG" id="llc:LACR_1335"/>
<dbReference type="HOGENOM" id="CLU_025113_0_0_9"/>
<dbReference type="UniPathway" id="UPA00031">
    <property type="reaction ID" value="UER00006"/>
</dbReference>
<dbReference type="Proteomes" id="UP000000240">
    <property type="component" value="Chromosome"/>
</dbReference>
<dbReference type="GO" id="GO:0005737">
    <property type="term" value="C:cytoplasm"/>
    <property type="evidence" value="ECO:0007669"/>
    <property type="project" value="UniProtKB-SubCell"/>
</dbReference>
<dbReference type="GO" id="GO:0140096">
    <property type="term" value="F:catalytic activity, acting on a protein"/>
    <property type="evidence" value="ECO:0007669"/>
    <property type="project" value="UniProtKB-ARBA"/>
</dbReference>
<dbReference type="GO" id="GO:0004821">
    <property type="term" value="F:histidine-tRNA ligase activity"/>
    <property type="evidence" value="ECO:0007669"/>
    <property type="project" value="TreeGrafter"/>
</dbReference>
<dbReference type="GO" id="GO:0016740">
    <property type="term" value="F:transferase activity"/>
    <property type="evidence" value="ECO:0007669"/>
    <property type="project" value="UniProtKB-ARBA"/>
</dbReference>
<dbReference type="GO" id="GO:0006427">
    <property type="term" value="P:histidyl-tRNA aminoacylation"/>
    <property type="evidence" value="ECO:0007669"/>
    <property type="project" value="TreeGrafter"/>
</dbReference>
<dbReference type="GO" id="GO:0000105">
    <property type="term" value="P:L-histidine biosynthetic process"/>
    <property type="evidence" value="ECO:0007669"/>
    <property type="project" value="UniProtKB-UniRule"/>
</dbReference>
<dbReference type="CDD" id="cd00773">
    <property type="entry name" value="HisRS-like_core"/>
    <property type="match status" value="1"/>
</dbReference>
<dbReference type="Gene3D" id="3.30.930.10">
    <property type="entry name" value="Bira Bifunctional Protein, Domain 2"/>
    <property type="match status" value="1"/>
</dbReference>
<dbReference type="HAMAP" id="MF_00125">
    <property type="entry name" value="HisZ"/>
    <property type="match status" value="1"/>
</dbReference>
<dbReference type="InterPro" id="IPR006195">
    <property type="entry name" value="aa-tRNA-synth_II"/>
</dbReference>
<dbReference type="InterPro" id="IPR045864">
    <property type="entry name" value="aa-tRNA-synth_II/BPL/LPL"/>
</dbReference>
<dbReference type="InterPro" id="IPR041715">
    <property type="entry name" value="HisRS-like_core"/>
</dbReference>
<dbReference type="InterPro" id="IPR004516">
    <property type="entry name" value="HisRS/HisZ"/>
</dbReference>
<dbReference type="InterPro" id="IPR004517">
    <property type="entry name" value="HisZ"/>
</dbReference>
<dbReference type="PANTHER" id="PTHR43707:SF6">
    <property type="entry name" value="ATP PHOSPHORIBOSYLTRANSFERASE REGULATORY SUBUNIT"/>
    <property type="match status" value="1"/>
</dbReference>
<dbReference type="PANTHER" id="PTHR43707">
    <property type="entry name" value="HISTIDYL-TRNA SYNTHETASE"/>
    <property type="match status" value="1"/>
</dbReference>
<dbReference type="Pfam" id="PF13393">
    <property type="entry name" value="tRNA-synt_His"/>
    <property type="match status" value="1"/>
</dbReference>
<dbReference type="PIRSF" id="PIRSF001549">
    <property type="entry name" value="His-tRNA_synth"/>
    <property type="match status" value="1"/>
</dbReference>
<dbReference type="SUPFAM" id="SSF55681">
    <property type="entry name" value="Class II aaRS and biotin synthetases"/>
    <property type="match status" value="1"/>
</dbReference>
<dbReference type="PROSITE" id="PS50862">
    <property type="entry name" value="AA_TRNA_LIGASE_II"/>
    <property type="match status" value="1"/>
</dbReference>
<gene>
    <name evidence="1" type="primary">hisZ</name>
    <name type="ordered locus">LACR_1335</name>
</gene>
<sequence>MEKMNYLLPEESGEMTLSGITTLRKMEQKLRNLFESQNYQEVMPPNFESVELYTGLDAGFEQEKMFQFINHEGKSIALRYDFTVPLARNFALSELKEARYSYFGKVFRKEKRHKGRRTESYQVGTELLGLSEVTGDQEILGLTFMTLEALTLKNTIVEIGSAAFFKRLCELSGGDAPLFSELLEKKSLSGMKAFVDKHEMRGAPRDLLLALMTTTDLPTMKKLVLATGDEKLSQALEMLEALNLPDKTAICQIHYDFAMVPAMGYYTGLMFQVYVEGVAQAVISGGRYDKLLKQFGKTTGSIGFCVHMENVMKGLNND</sequence>
<comment type="function">
    <text evidence="1">Required for the first step of histidine biosynthesis. May allow the feedback regulation of ATP phosphoribosyltransferase activity by histidine.</text>
</comment>
<comment type="pathway">
    <text evidence="1">Amino-acid biosynthesis; L-histidine biosynthesis; L-histidine from 5-phospho-alpha-D-ribose 1-diphosphate: step 1/9.</text>
</comment>
<comment type="subunit">
    <text evidence="1">Heteromultimer composed of HisG and HisZ subunits.</text>
</comment>
<comment type="subcellular location">
    <subcellularLocation>
        <location evidence="1">Cytoplasm</location>
    </subcellularLocation>
</comment>
<comment type="miscellaneous">
    <text>This function is generally fulfilled by the C-terminal part of HisG, which is missing in some bacteria such as this one.</text>
</comment>
<comment type="similarity">
    <text evidence="1">Belongs to the class-II aminoacyl-tRNA synthetase family. HisZ subfamily.</text>
</comment>
<accession>Q02YW4</accession>
<organism>
    <name type="scientific">Lactococcus lactis subsp. cremoris (strain SK11)</name>
    <dbReference type="NCBI Taxonomy" id="272622"/>
    <lineage>
        <taxon>Bacteria</taxon>
        <taxon>Bacillati</taxon>
        <taxon>Bacillota</taxon>
        <taxon>Bacilli</taxon>
        <taxon>Lactobacillales</taxon>
        <taxon>Streptococcaceae</taxon>
        <taxon>Lactococcus</taxon>
        <taxon>Lactococcus cremoris subsp. cremoris</taxon>
    </lineage>
</organism>
<reference key="1">
    <citation type="journal article" date="2006" name="Proc. Natl. Acad. Sci. U.S.A.">
        <title>Comparative genomics of the lactic acid bacteria.</title>
        <authorList>
            <person name="Makarova K.S."/>
            <person name="Slesarev A."/>
            <person name="Wolf Y.I."/>
            <person name="Sorokin A."/>
            <person name="Mirkin B."/>
            <person name="Koonin E.V."/>
            <person name="Pavlov A."/>
            <person name="Pavlova N."/>
            <person name="Karamychev V."/>
            <person name="Polouchine N."/>
            <person name="Shakhova V."/>
            <person name="Grigoriev I."/>
            <person name="Lou Y."/>
            <person name="Rohksar D."/>
            <person name="Lucas S."/>
            <person name="Huang K."/>
            <person name="Goodstein D.M."/>
            <person name="Hawkins T."/>
            <person name="Plengvidhya V."/>
            <person name="Welker D."/>
            <person name="Hughes J."/>
            <person name="Goh Y."/>
            <person name="Benson A."/>
            <person name="Baldwin K."/>
            <person name="Lee J.-H."/>
            <person name="Diaz-Muniz I."/>
            <person name="Dosti B."/>
            <person name="Smeianov V."/>
            <person name="Wechter W."/>
            <person name="Barabote R."/>
            <person name="Lorca G."/>
            <person name="Altermann E."/>
            <person name="Barrangou R."/>
            <person name="Ganesan B."/>
            <person name="Xie Y."/>
            <person name="Rawsthorne H."/>
            <person name="Tamir D."/>
            <person name="Parker C."/>
            <person name="Breidt F."/>
            <person name="Broadbent J.R."/>
            <person name="Hutkins R."/>
            <person name="O'Sullivan D."/>
            <person name="Steele J."/>
            <person name="Unlu G."/>
            <person name="Saier M.H. Jr."/>
            <person name="Klaenhammer T."/>
            <person name="Richardson P."/>
            <person name="Kozyavkin S."/>
            <person name="Weimer B.C."/>
            <person name="Mills D.A."/>
        </authorList>
    </citation>
    <scope>NUCLEOTIDE SEQUENCE [LARGE SCALE GENOMIC DNA]</scope>
    <source>
        <strain>SK11</strain>
    </source>
</reference>
<name>HISZ_LACLS</name>
<feature type="chain" id="PRO_1000016266" description="ATP phosphoribosyltransferase regulatory subunit">
    <location>
        <begin position="1"/>
        <end position="318"/>
    </location>
</feature>
<evidence type="ECO:0000255" key="1">
    <source>
        <dbReference type="HAMAP-Rule" id="MF_00125"/>
    </source>
</evidence>
<protein>
    <recommendedName>
        <fullName evidence="1">ATP phosphoribosyltransferase regulatory subunit</fullName>
    </recommendedName>
</protein>
<keyword id="KW-0028">Amino-acid biosynthesis</keyword>
<keyword id="KW-0963">Cytoplasm</keyword>
<keyword id="KW-0368">Histidine biosynthesis</keyword>
<proteinExistence type="inferred from homology"/>